<sequence length="408" mass="45272">MSLNNLSNSYNQYLAQESHQILRHLFLNKQYSPLVKRDDDSSATVTCGGDANEFNEYGHLGYRIGAIFVILATSLIGMNLPLVLSKITKNRPNVYIEYLYLFARYFGSGVILATAFIHLLAPACNKLYDPCLDDLFGGYDWAPGICLISCWFILLLEVLLNRYVEWRFGMEIGDHHGPTLGAKQHSHSHEDGAHGVHEHPVYDIEECADGVEHECVKDDLEEVKLEPYTNTDSTDLTTKEEARSFLLKQQLTAFIILESSIILHSVIIGLTTAVSGEEFKTLFPVIIFHQAFEGCGLGSRLAGMAWGPKTAWVPWVLGVIYSLVTPIGMAAGLGVREHWDPLAHGSYAAQGVLDAISSGILVYAGLVELLAHDFLFSPERERNWYKLIYLLACSMAGTGVMALLGKWA</sequence>
<comment type="function">
    <text evidence="3">High-affinity zinc transport protein. Regulates intracellular zinc levels.</text>
</comment>
<comment type="subcellular location">
    <subcellularLocation>
        <location evidence="2">Endoplasmic reticulum membrane</location>
        <topology evidence="2">Multi-pass membrane protein</topology>
    </subcellularLocation>
</comment>
<comment type="similarity">
    <text evidence="5">Belongs to the ZIP transporter (TC 2.A.5) family.</text>
</comment>
<accession>O94639</accession>
<keyword id="KW-0256">Endoplasmic reticulum</keyword>
<keyword id="KW-0406">Ion transport</keyword>
<keyword id="KW-0472">Membrane</keyword>
<keyword id="KW-0597">Phosphoprotein</keyword>
<keyword id="KW-1185">Reference proteome</keyword>
<keyword id="KW-0812">Transmembrane</keyword>
<keyword id="KW-1133">Transmembrane helix</keyword>
<keyword id="KW-0813">Transport</keyword>
<keyword id="KW-0862">Zinc</keyword>
<keyword id="KW-0864">Zinc transport</keyword>
<gene>
    <name type="primary">zrt1</name>
    <name type="ORF">SPBC16D10.06</name>
</gene>
<evidence type="ECO:0000255" key="1"/>
<evidence type="ECO:0000269" key="2">
    <source>
    </source>
</evidence>
<evidence type="ECO:0000269" key="3">
    <source>
    </source>
</evidence>
<evidence type="ECO:0000269" key="4">
    <source>
    </source>
</evidence>
<evidence type="ECO:0000305" key="5"/>
<feature type="chain" id="PRO_0000316574" description="Zinc-regulated transporter 1">
    <location>
        <begin position="1"/>
        <end position="408"/>
    </location>
</feature>
<feature type="transmembrane region" description="Helical" evidence="1">
    <location>
        <begin position="64"/>
        <end position="84"/>
    </location>
</feature>
<feature type="transmembrane region" description="Helical" evidence="1">
    <location>
        <begin position="101"/>
        <end position="121"/>
    </location>
</feature>
<feature type="transmembrane region" description="Helical" evidence="1">
    <location>
        <begin position="141"/>
        <end position="161"/>
    </location>
</feature>
<feature type="transmembrane region" description="Helical" evidence="1">
    <location>
        <begin position="254"/>
        <end position="274"/>
    </location>
</feature>
<feature type="transmembrane region" description="Helical" evidence="1">
    <location>
        <begin position="279"/>
        <end position="299"/>
    </location>
</feature>
<feature type="transmembrane region" description="Helical" evidence="1">
    <location>
        <begin position="315"/>
        <end position="335"/>
    </location>
</feature>
<feature type="transmembrane region" description="Helical" evidence="1">
    <location>
        <begin position="351"/>
        <end position="371"/>
    </location>
</feature>
<feature type="transmembrane region" description="Helical" evidence="1">
    <location>
        <begin position="387"/>
        <end position="407"/>
    </location>
</feature>
<feature type="modified residue" description="Phosphothreonine" evidence="4">
    <location>
        <position position="234"/>
    </location>
</feature>
<feature type="modified residue" description="Phosphothreonine" evidence="4">
    <location>
        <position position="237"/>
    </location>
</feature>
<reference key="1">
    <citation type="journal article" date="2002" name="Nature">
        <title>The genome sequence of Schizosaccharomyces pombe.</title>
        <authorList>
            <person name="Wood V."/>
            <person name="Gwilliam R."/>
            <person name="Rajandream M.A."/>
            <person name="Lyne M.H."/>
            <person name="Lyne R."/>
            <person name="Stewart A."/>
            <person name="Sgouros J.G."/>
            <person name="Peat N."/>
            <person name="Hayles J."/>
            <person name="Baker S.G."/>
            <person name="Basham D."/>
            <person name="Bowman S."/>
            <person name="Brooks K."/>
            <person name="Brown D."/>
            <person name="Brown S."/>
            <person name="Chillingworth T."/>
            <person name="Churcher C.M."/>
            <person name="Collins M."/>
            <person name="Connor R."/>
            <person name="Cronin A."/>
            <person name="Davis P."/>
            <person name="Feltwell T."/>
            <person name="Fraser A."/>
            <person name="Gentles S."/>
            <person name="Goble A."/>
            <person name="Hamlin N."/>
            <person name="Harris D.E."/>
            <person name="Hidalgo J."/>
            <person name="Hodgson G."/>
            <person name="Holroyd S."/>
            <person name="Hornsby T."/>
            <person name="Howarth S."/>
            <person name="Huckle E.J."/>
            <person name="Hunt S."/>
            <person name="Jagels K."/>
            <person name="James K.D."/>
            <person name="Jones L."/>
            <person name="Jones M."/>
            <person name="Leather S."/>
            <person name="McDonald S."/>
            <person name="McLean J."/>
            <person name="Mooney P."/>
            <person name="Moule S."/>
            <person name="Mungall K.L."/>
            <person name="Murphy L.D."/>
            <person name="Niblett D."/>
            <person name="Odell C."/>
            <person name="Oliver K."/>
            <person name="O'Neil S."/>
            <person name="Pearson D."/>
            <person name="Quail M.A."/>
            <person name="Rabbinowitsch E."/>
            <person name="Rutherford K.M."/>
            <person name="Rutter S."/>
            <person name="Saunders D."/>
            <person name="Seeger K."/>
            <person name="Sharp S."/>
            <person name="Skelton J."/>
            <person name="Simmonds M.N."/>
            <person name="Squares R."/>
            <person name="Squares S."/>
            <person name="Stevens K."/>
            <person name="Taylor K."/>
            <person name="Taylor R.G."/>
            <person name="Tivey A."/>
            <person name="Walsh S.V."/>
            <person name="Warren T."/>
            <person name="Whitehead S."/>
            <person name="Woodward J.R."/>
            <person name="Volckaert G."/>
            <person name="Aert R."/>
            <person name="Robben J."/>
            <person name="Grymonprez B."/>
            <person name="Weltjens I."/>
            <person name="Vanstreels E."/>
            <person name="Rieger M."/>
            <person name="Schaefer M."/>
            <person name="Mueller-Auer S."/>
            <person name="Gabel C."/>
            <person name="Fuchs M."/>
            <person name="Duesterhoeft A."/>
            <person name="Fritzc C."/>
            <person name="Holzer E."/>
            <person name="Moestl D."/>
            <person name="Hilbert H."/>
            <person name="Borzym K."/>
            <person name="Langer I."/>
            <person name="Beck A."/>
            <person name="Lehrach H."/>
            <person name="Reinhardt R."/>
            <person name="Pohl T.M."/>
            <person name="Eger P."/>
            <person name="Zimmermann W."/>
            <person name="Wedler H."/>
            <person name="Wambutt R."/>
            <person name="Purnelle B."/>
            <person name="Goffeau A."/>
            <person name="Cadieu E."/>
            <person name="Dreano S."/>
            <person name="Gloux S."/>
            <person name="Lelaure V."/>
            <person name="Mottier S."/>
            <person name="Galibert F."/>
            <person name="Aves S.J."/>
            <person name="Xiang Z."/>
            <person name="Hunt C."/>
            <person name="Moore K."/>
            <person name="Hurst S.M."/>
            <person name="Lucas M."/>
            <person name="Rochet M."/>
            <person name="Gaillardin C."/>
            <person name="Tallada V.A."/>
            <person name="Garzon A."/>
            <person name="Thode G."/>
            <person name="Daga R.R."/>
            <person name="Cruzado L."/>
            <person name="Jimenez J."/>
            <person name="Sanchez M."/>
            <person name="del Rey F."/>
            <person name="Benito J."/>
            <person name="Dominguez A."/>
            <person name="Revuelta J.L."/>
            <person name="Moreno S."/>
            <person name="Armstrong J."/>
            <person name="Forsburg S.L."/>
            <person name="Cerutti L."/>
            <person name="Lowe T."/>
            <person name="McCombie W.R."/>
            <person name="Paulsen I."/>
            <person name="Potashkin J."/>
            <person name="Shpakovski G.V."/>
            <person name="Ussery D."/>
            <person name="Barrell B.G."/>
            <person name="Nurse P."/>
        </authorList>
    </citation>
    <scope>NUCLEOTIDE SEQUENCE [LARGE SCALE GENOMIC DNA]</scope>
    <source>
        <strain>972 / ATCC 24843</strain>
    </source>
</reference>
<reference key="2">
    <citation type="journal article" date="2006" name="Nat. Biotechnol.">
        <title>ORFeome cloning and global analysis of protein localization in the fission yeast Schizosaccharomyces pombe.</title>
        <authorList>
            <person name="Matsuyama A."/>
            <person name="Arai R."/>
            <person name="Yashiroda Y."/>
            <person name="Shirai A."/>
            <person name="Kamata A."/>
            <person name="Sekido S."/>
            <person name="Kobayashi Y."/>
            <person name="Hashimoto A."/>
            <person name="Hamamoto M."/>
            <person name="Hiraoka Y."/>
            <person name="Horinouchi S."/>
            <person name="Yoshida M."/>
        </authorList>
    </citation>
    <scope>SUBCELLULAR LOCATION [LARGE SCALE ANALYSIS]</scope>
</reference>
<reference key="3">
    <citation type="journal article" date="2008" name="Eukaryot. Cell">
        <title>Response of Schizosaccharomyces pombe to zinc deficiency.</title>
        <authorList>
            <person name="Dainty S.J."/>
            <person name="Kennedy C.A."/>
            <person name="Watt S."/>
            <person name="Baehler J."/>
            <person name="Whitehall S.K."/>
        </authorList>
    </citation>
    <scope>FUNCTION</scope>
</reference>
<reference key="4">
    <citation type="journal article" date="2008" name="J. Proteome Res.">
        <title>Phosphoproteome analysis of fission yeast.</title>
        <authorList>
            <person name="Wilson-Grady J.T."/>
            <person name="Villen J."/>
            <person name="Gygi S.P."/>
        </authorList>
    </citation>
    <scope>PHOSPHORYLATION [LARGE SCALE ANALYSIS] AT THR-234 AND THR-237</scope>
    <scope>IDENTIFICATION BY MASS SPECTROMETRY</scope>
</reference>
<protein>
    <recommendedName>
        <fullName>Zinc-regulated transporter 1</fullName>
    </recommendedName>
    <alternativeName>
        <fullName>High-affinity zinc transport protein zrt1</fullName>
    </alternativeName>
</protein>
<dbReference type="EMBL" id="CU329671">
    <property type="protein sequence ID" value="CAB38510.1"/>
    <property type="molecule type" value="Genomic_DNA"/>
</dbReference>
<dbReference type="PIR" id="T39570">
    <property type="entry name" value="T39570"/>
</dbReference>
<dbReference type="RefSeq" id="NP_596501.1">
    <property type="nucleotide sequence ID" value="NM_001022422.2"/>
</dbReference>
<dbReference type="BioGRID" id="276210">
    <property type="interactions" value="3"/>
</dbReference>
<dbReference type="FunCoup" id="O94639">
    <property type="interactions" value="301"/>
</dbReference>
<dbReference type="STRING" id="284812.O94639"/>
<dbReference type="TCDB" id="2.A.5.1.8">
    <property type="family name" value="the zinc (zn(2+))-iron (fe(2+)) permease (zip) family"/>
</dbReference>
<dbReference type="iPTMnet" id="O94639"/>
<dbReference type="PaxDb" id="4896-SPBC16D10.06.1"/>
<dbReference type="EnsemblFungi" id="SPBC16D10.06.1">
    <property type="protein sequence ID" value="SPBC16D10.06.1:pep"/>
    <property type="gene ID" value="SPBC16D10.06"/>
</dbReference>
<dbReference type="GeneID" id="2539655"/>
<dbReference type="KEGG" id="spo:2539655"/>
<dbReference type="PomBase" id="SPBC16D10.06">
    <property type="gene designation" value="zrt1"/>
</dbReference>
<dbReference type="VEuPathDB" id="FungiDB:SPBC16D10.06"/>
<dbReference type="eggNOG" id="KOG1558">
    <property type="taxonomic scope" value="Eukaryota"/>
</dbReference>
<dbReference type="HOGENOM" id="CLU_027089_0_2_1"/>
<dbReference type="InParanoid" id="O94639"/>
<dbReference type="OMA" id="YNPGSFT"/>
<dbReference type="PhylomeDB" id="O94639"/>
<dbReference type="PRO" id="PR:O94639"/>
<dbReference type="Proteomes" id="UP000002485">
    <property type="component" value="Chromosome II"/>
</dbReference>
<dbReference type="GO" id="GO:0005789">
    <property type="term" value="C:endoplasmic reticulum membrane"/>
    <property type="evidence" value="ECO:0007669"/>
    <property type="project" value="UniProtKB-SubCell"/>
</dbReference>
<dbReference type="GO" id="GO:0005886">
    <property type="term" value="C:plasma membrane"/>
    <property type="evidence" value="ECO:0000315"/>
    <property type="project" value="PomBase"/>
</dbReference>
<dbReference type="GO" id="GO:0000006">
    <property type="term" value="F:high-affinity zinc transmembrane transporter activity"/>
    <property type="evidence" value="ECO:0000314"/>
    <property type="project" value="PomBase"/>
</dbReference>
<dbReference type="GO" id="GO:0005385">
    <property type="term" value="F:zinc ion transmembrane transporter activity"/>
    <property type="evidence" value="ECO:0000318"/>
    <property type="project" value="GO_Central"/>
</dbReference>
<dbReference type="GO" id="GO:0006882">
    <property type="term" value="P:intracellular zinc ion homeostasis"/>
    <property type="evidence" value="ECO:0000315"/>
    <property type="project" value="PomBase"/>
</dbReference>
<dbReference type="GO" id="GO:0071578">
    <property type="term" value="P:zinc ion import across plasma membrane"/>
    <property type="evidence" value="ECO:0000314"/>
    <property type="project" value="PomBase"/>
</dbReference>
<dbReference type="GO" id="GO:0071577">
    <property type="term" value="P:zinc ion transmembrane transport"/>
    <property type="evidence" value="ECO:0000318"/>
    <property type="project" value="GO_Central"/>
</dbReference>
<dbReference type="InterPro" id="IPR003689">
    <property type="entry name" value="ZIP"/>
</dbReference>
<dbReference type="InterPro" id="IPR004698">
    <property type="entry name" value="Zn/Fe_permease_fun/pln"/>
</dbReference>
<dbReference type="NCBIfam" id="TIGR00820">
    <property type="entry name" value="zip"/>
    <property type="match status" value="1"/>
</dbReference>
<dbReference type="PANTHER" id="PTHR11040:SF32">
    <property type="entry name" value="ZINC-REGULATED TRANSPORTER 1"/>
    <property type="match status" value="1"/>
</dbReference>
<dbReference type="PANTHER" id="PTHR11040">
    <property type="entry name" value="ZINC/IRON TRANSPORTER"/>
    <property type="match status" value="1"/>
</dbReference>
<dbReference type="Pfam" id="PF02535">
    <property type="entry name" value="Zip"/>
    <property type="match status" value="1"/>
</dbReference>
<organism>
    <name type="scientific">Schizosaccharomyces pombe (strain 972 / ATCC 24843)</name>
    <name type="common">Fission yeast</name>
    <dbReference type="NCBI Taxonomy" id="284812"/>
    <lineage>
        <taxon>Eukaryota</taxon>
        <taxon>Fungi</taxon>
        <taxon>Dikarya</taxon>
        <taxon>Ascomycota</taxon>
        <taxon>Taphrinomycotina</taxon>
        <taxon>Schizosaccharomycetes</taxon>
        <taxon>Schizosaccharomycetales</taxon>
        <taxon>Schizosaccharomycetaceae</taxon>
        <taxon>Schizosaccharomyces</taxon>
    </lineage>
</organism>
<name>ZRT1_SCHPO</name>
<proteinExistence type="evidence at protein level"/>